<comment type="function">
    <text evidence="1">Catalyzes the isomerization of sedoheptulose 7-phosphate in D-glycero-D-manno-heptose 7-phosphate.</text>
</comment>
<comment type="catalytic activity">
    <reaction evidence="1">
        <text>2 D-sedoheptulose 7-phosphate = D-glycero-alpha-D-manno-heptose 7-phosphate + D-glycero-beta-D-manno-heptose 7-phosphate</text>
        <dbReference type="Rhea" id="RHEA:27489"/>
        <dbReference type="ChEBI" id="CHEBI:57483"/>
        <dbReference type="ChEBI" id="CHEBI:60203"/>
        <dbReference type="ChEBI" id="CHEBI:60204"/>
        <dbReference type="EC" id="5.3.1.28"/>
    </reaction>
</comment>
<comment type="cofactor">
    <cofactor evidence="1">
        <name>Zn(2+)</name>
        <dbReference type="ChEBI" id="CHEBI:29105"/>
    </cofactor>
    <text evidence="1">Binds 1 zinc ion per subunit.</text>
</comment>
<comment type="pathway">
    <text evidence="1">Carbohydrate biosynthesis; D-glycero-D-manno-heptose 7-phosphate biosynthesis; D-glycero-alpha-D-manno-heptose 7-phosphate and D-glycero-beta-D-manno-heptose 7-phosphate from sedoheptulose 7-phosphate: step 1/1.</text>
</comment>
<comment type="subcellular location">
    <subcellularLocation>
        <location evidence="1">Cytoplasm</location>
    </subcellularLocation>
</comment>
<comment type="miscellaneous">
    <text evidence="1">The reaction produces a racemic mixture of D-glycero-alpha-D-manno-heptose 7-phosphate and D-glycero-beta-D-manno-heptose 7-phosphate.</text>
</comment>
<comment type="similarity">
    <text evidence="1">Belongs to the SIS family. GmhA subfamily.</text>
</comment>
<keyword id="KW-0119">Carbohydrate metabolism</keyword>
<keyword id="KW-0963">Cytoplasm</keyword>
<keyword id="KW-0413">Isomerase</keyword>
<keyword id="KW-0479">Metal-binding</keyword>
<keyword id="KW-1185">Reference proteome</keyword>
<keyword id="KW-0862">Zinc</keyword>
<proteinExistence type="inferred from homology"/>
<name>GMHA_MYCTA</name>
<reference key="1">
    <citation type="journal article" date="2008" name="PLoS ONE">
        <title>Genetic basis of virulence attenuation revealed by comparative genomic analysis of Mycobacterium tuberculosis strain H37Ra versus H37Rv.</title>
        <authorList>
            <person name="Zheng H."/>
            <person name="Lu L."/>
            <person name="Wang B."/>
            <person name="Pu S."/>
            <person name="Zhang X."/>
            <person name="Zhu G."/>
            <person name="Shi W."/>
            <person name="Zhang L."/>
            <person name="Wang H."/>
            <person name="Wang S."/>
            <person name="Zhao G."/>
            <person name="Zhang Y."/>
        </authorList>
    </citation>
    <scope>NUCLEOTIDE SEQUENCE [LARGE SCALE GENOMIC DNA]</scope>
    <source>
        <strain>ATCC 25177 / H37Ra</strain>
    </source>
</reference>
<sequence length="196" mass="20923">MCTARTAEEIFVETIAVKTRILNDRVLLEAARAIGDRLIAGYRAGARVFMCGNGGSAADAQHFAAELTGHLIFDRPPLGAEALHANSSHLTAVANDYDYDTVFARALEGSARPGDTLFAISTSGNSMSVLRAAKTARELGVTVVAMTGESGGQLAEFADFLINVPSRDTGRIQESHIVFIHAISEHVEHALFAPRQ</sequence>
<accession>A5TYI7</accession>
<gene>
    <name evidence="1" type="primary">gmhA</name>
    <name type="ordered locus">MRA_0119</name>
</gene>
<feature type="chain" id="PRO_1000009081" description="Phosphoheptose isomerase">
    <location>
        <begin position="1"/>
        <end position="196"/>
    </location>
</feature>
<feature type="domain" description="SIS" evidence="1">
    <location>
        <begin position="38"/>
        <end position="196"/>
    </location>
</feature>
<feature type="binding site" evidence="1">
    <location>
        <begin position="53"/>
        <end position="55"/>
    </location>
    <ligand>
        <name>substrate</name>
    </ligand>
</feature>
<feature type="binding site" evidence="1">
    <location>
        <position position="62"/>
    </location>
    <ligand>
        <name>Zn(2+)</name>
        <dbReference type="ChEBI" id="CHEBI:29105"/>
    </ligand>
</feature>
<feature type="binding site" evidence="1">
    <location>
        <position position="66"/>
    </location>
    <ligand>
        <name>substrate</name>
    </ligand>
</feature>
<feature type="binding site" evidence="1">
    <location>
        <position position="66"/>
    </location>
    <ligand>
        <name>Zn(2+)</name>
        <dbReference type="ChEBI" id="CHEBI:29105"/>
    </ligand>
</feature>
<feature type="binding site" evidence="1">
    <location>
        <begin position="95"/>
        <end position="96"/>
    </location>
    <ligand>
        <name>substrate</name>
    </ligand>
</feature>
<feature type="binding site" evidence="1">
    <location>
        <begin position="121"/>
        <end position="123"/>
    </location>
    <ligand>
        <name>substrate</name>
    </ligand>
</feature>
<feature type="binding site" evidence="1">
    <location>
        <position position="126"/>
    </location>
    <ligand>
        <name>substrate</name>
    </ligand>
</feature>
<feature type="binding site" evidence="1">
    <location>
        <position position="173"/>
    </location>
    <ligand>
        <name>substrate</name>
    </ligand>
</feature>
<feature type="binding site" evidence="1">
    <location>
        <position position="173"/>
    </location>
    <ligand>
        <name>Zn(2+)</name>
        <dbReference type="ChEBI" id="CHEBI:29105"/>
    </ligand>
</feature>
<feature type="binding site" evidence="1">
    <location>
        <position position="181"/>
    </location>
    <ligand>
        <name>Zn(2+)</name>
        <dbReference type="ChEBI" id="CHEBI:29105"/>
    </ligand>
</feature>
<protein>
    <recommendedName>
        <fullName evidence="1">Phosphoheptose isomerase</fullName>
        <ecNumber evidence="1">5.3.1.28</ecNumber>
    </recommendedName>
    <alternativeName>
        <fullName evidence="1">Sedoheptulose 7-phosphate isomerase</fullName>
    </alternativeName>
</protein>
<dbReference type="EC" id="5.3.1.28" evidence="1"/>
<dbReference type="EMBL" id="CP000611">
    <property type="protein sequence ID" value="ABQ71837.1"/>
    <property type="molecule type" value="Genomic_DNA"/>
</dbReference>
<dbReference type="RefSeq" id="WP_003400839.1">
    <property type="nucleotide sequence ID" value="NZ_CP016972.1"/>
</dbReference>
<dbReference type="SMR" id="A5TYI7"/>
<dbReference type="KEGG" id="mra:MRA_0119"/>
<dbReference type="eggNOG" id="COG0279">
    <property type="taxonomic scope" value="Bacteria"/>
</dbReference>
<dbReference type="HOGENOM" id="CLU_080999_1_1_11"/>
<dbReference type="UniPathway" id="UPA00041">
    <property type="reaction ID" value="UER00436"/>
</dbReference>
<dbReference type="Proteomes" id="UP000001988">
    <property type="component" value="Chromosome"/>
</dbReference>
<dbReference type="GO" id="GO:0005737">
    <property type="term" value="C:cytoplasm"/>
    <property type="evidence" value="ECO:0007669"/>
    <property type="project" value="UniProtKB-SubCell"/>
</dbReference>
<dbReference type="GO" id="GO:0097367">
    <property type="term" value="F:carbohydrate derivative binding"/>
    <property type="evidence" value="ECO:0007669"/>
    <property type="project" value="InterPro"/>
</dbReference>
<dbReference type="GO" id="GO:0008968">
    <property type="term" value="F:D-sedoheptulose 7-phosphate isomerase activity"/>
    <property type="evidence" value="ECO:0007669"/>
    <property type="project" value="UniProtKB-UniRule"/>
</dbReference>
<dbReference type="GO" id="GO:0008270">
    <property type="term" value="F:zinc ion binding"/>
    <property type="evidence" value="ECO:0007669"/>
    <property type="project" value="UniProtKB-UniRule"/>
</dbReference>
<dbReference type="GO" id="GO:0005975">
    <property type="term" value="P:carbohydrate metabolic process"/>
    <property type="evidence" value="ECO:0007669"/>
    <property type="project" value="UniProtKB-UniRule"/>
</dbReference>
<dbReference type="GO" id="GO:2001061">
    <property type="term" value="P:D-glycero-D-manno-heptose 7-phosphate biosynthetic process"/>
    <property type="evidence" value="ECO:0007669"/>
    <property type="project" value="UniProtKB-UniPathway"/>
</dbReference>
<dbReference type="CDD" id="cd05006">
    <property type="entry name" value="SIS_GmhA"/>
    <property type="match status" value="1"/>
</dbReference>
<dbReference type="Gene3D" id="3.40.50.10490">
    <property type="entry name" value="Glucose-6-phosphate isomerase like protein, domain 1"/>
    <property type="match status" value="1"/>
</dbReference>
<dbReference type="HAMAP" id="MF_00067">
    <property type="entry name" value="GmhA"/>
    <property type="match status" value="1"/>
</dbReference>
<dbReference type="InterPro" id="IPR035461">
    <property type="entry name" value="GmhA/DiaA"/>
</dbReference>
<dbReference type="InterPro" id="IPR004515">
    <property type="entry name" value="Phosphoheptose_Isoase"/>
</dbReference>
<dbReference type="InterPro" id="IPR001347">
    <property type="entry name" value="SIS_dom"/>
</dbReference>
<dbReference type="InterPro" id="IPR046348">
    <property type="entry name" value="SIS_dom_sf"/>
</dbReference>
<dbReference type="InterPro" id="IPR050099">
    <property type="entry name" value="SIS_GmhA/DiaA_subfam"/>
</dbReference>
<dbReference type="NCBIfam" id="NF010547">
    <property type="entry name" value="PRK13938.1"/>
    <property type="match status" value="1"/>
</dbReference>
<dbReference type="PANTHER" id="PTHR30390:SF6">
    <property type="entry name" value="DNAA INITIATOR-ASSOCIATING PROTEIN DIAA"/>
    <property type="match status" value="1"/>
</dbReference>
<dbReference type="PANTHER" id="PTHR30390">
    <property type="entry name" value="SEDOHEPTULOSE 7-PHOSPHATE ISOMERASE / DNAA INITIATOR-ASSOCIATING FACTOR FOR REPLICATION INITIATION"/>
    <property type="match status" value="1"/>
</dbReference>
<dbReference type="Pfam" id="PF13580">
    <property type="entry name" value="SIS_2"/>
    <property type="match status" value="1"/>
</dbReference>
<dbReference type="SUPFAM" id="SSF53697">
    <property type="entry name" value="SIS domain"/>
    <property type="match status" value="1"/>
</dbReference>
<dbReference type="PROSITE" id="PS51464">
    <property type="entry name" value="SIS"/>
    <property type="match status" value="1"/>
</dbReference>
<organism>
    <name type="scientific">Mycobacterium tuberculosis (strain ATCC 25177 / H37Ra)</name>
    <dbReference type="NCBI Taxonomy" id="419947"/>
    <lineage>
        <taxon>Bacteria</taxon>
        <taxon>Bacillati</taxon>
        <taxon>Actinomycetota</taxon>
        <taxon>Actinomycetes</taxon>
        <taxon>Mycobacteriales</taxon>
        <taxon>Mycobacteriaceae</taxon>
        <taxon>Mycobacterium</taxon>
        <taxon>Mycobacterium tuberculosis complex</taxon>
    </lineage>
</organism>
<evidence type="ECO:0000255" key="1">
    <source>
        <dbReference type="HAMAP-Rule" id="MF_00067"/>
    </source>
</evidence>